<dbReference type="EMBL" id="CP000253">
    <property type="protein sequence ID" value="ABD29940.1"/>
    <property type="molecule type" value="Genomic_DNA"/>
</dbReference>
<dbReference type="RefSeq" id="WP_001056234.1">
    <property type="nucleotide sequence ID" value="NC_007795.1"/>
</dbReference>
<dbReference type="RefSeq" id="YP_499368.1">
    <property type="nucleotide sequence ID" value="NC_007795.1"/>
</dbReference>
<dbReference type="PDB" id="2VR3">
    <property type="method" value="X-ray"/>
    <property type="resolution" value="1.95 A"/>
    <property type="chains" value="A/B=229-545"/>
</dbReference>
<dbReference type="PDBsum" id="2VR3"/>
<dbReference type="SMR" id="Q2G015"/>
<dbReference type="STRING" id="93061.SAOUHSC_00812"/>
<dbReference type="PaxDb" id="1280-SAXN108_0856"/>
<dbReference type="GeneID" id="3919375"/>
<dbReference type="KEGG" id="sao:SAOUHSC_00812"/>
<dbReference type="PATRIC" id="fig|93061.5.peg.734"/>
<dbReference type="eggNOG" id="COG2931">
    <property type="taxonomic scope" value="Bacteria"/>
</dbReference>
<dbReference type="eggNOG" id="COG3266">
    <property type="taxonomic scope" value="Bacteria"/>
</dbReference>
<dbReference type="HOGENOM" id="CLU_010159_0_0_9"/>
<dbReference type="OrthoDB" id="2414599at2"/>
<dbReference type="EvolutionaryTrace" id="Q2G015"/>
<dbReference type="Proteomes" id="UP000008816">
    <property type="component" value="Chromosome"/>
</dbReference>
<dbReference type="GO" id="GO:0005576">
    <property type="term" value="C:extracellular region"/>
    <property type="evidence" value="ECO:0007669"/>
    <property type="project" value="UniProtKB-KW"/>
</dbReference>
<dbReference type="GO" id="GO:0070051">
    <property type="term" value="F:fibrinogen binding"/>
    <property type="evidence" value="ECO:0000315"/>
    <property type="project" value="CAFA"/>
</dbReference>
<dbReference type="GO" id="GO:0001968">
    <property type="term" value="F:fibronectin binding"/>
    <property type="evidence" value="ECO:0000353"/>
    <property type="project" value="CAFA"/>
</dbReference>
<dbReference type="GO" id="GO:0098630">
    <property type="term" value="P:aggregation of unicellular organisms"/>
    <property type="evidence" value="ECO:0000315"/>
    <property type="project" value="CAFA"/>
</dbReference>
<dbReference type="GO" id="GO:0007155">
    <property type="term" value="P:cell adhesion"/>
    <property type="evidence" value="ECO:0007669"/>
    <property type="project" value="InterPro"/>
</dbReference>
<dbReference type="FunFam" id="2.60.40.1280:FF:000002">
    <property type="entry name" value="Clumping factor A"/>
    <property type="match status" value="1"/>
</dbReference>
<dbReference type="FunFam" id="2.60.40.1290:FF:000001">
    <property type="entry name" value="Clumping factor A"/>
    <property type="match status" value="1"/>
</dbReference>
<dbReference type="Gene3D" id="2.60.40.1280">
    <property type="match status" value="1"/>
</dbReference>
<dbReference type="Gene3D" id="2.60.40.1290">
    <property type="match status" value="1"/>
</dbReference>
<dbReference type="InterPro" id="IPR011266">
    <property type="entry name" value="Adhesin_Fg-bd_dom_2"/>
</dbReference>
<dbReference type="InterPro" id="IPR008966">
    <property type="entry name" value="Adhesion_dom_sf"/>
</dbReference>
<dbReference type="InterPro" id="IPR011252">
    <property type="entry name" value="Fibrogen-bd_dom1"/>
</dbReference>
<dbReference type="InterPro" id="IPR019931">
    <property type="entry name" value="LPXTG_anchor"/>
</dbReference>
<dbReference type="InterPro" id="IPR050972">
    <property type="entry name" value="SDr-like"/>
</dbReference>
<dbReference type="InterPro" id="IPR041171">
    <property type="entry name" value="SDR_Ig"/>
</dbReference>
<dbReference type="InterPro" id="IPR005877">
    <property type="entry name" value="YSIRK_signal_dom"/>
</dbReference>
<dbReference type="NCBIfam" id="TIGR01167">
    <property type="entry name" value="LPXTG_anchor"/>
    <property type="match status" value="1"/>
</dbReference>
<dbReference type="NCBIfam" id="NF033609">
    <property type="entry name" value="MSCRAMM_ClfA"/>
    <property type="match status" value="1"/>
</dbReference>
<dbReference type="NCBIfam" id="TIGR01168">
    <property type="entry name" value="YSIRK_signal"/>
    <property type="match status" value="1"/>
</dbReference>
<dbReference type="PANTHER" id="PTHR34403">
    <property type="entry name" value="TOL-PAL SYSTEM PROTEIN TOLA"/>
    <property type="match status" value="1"/>
</dbReference>
<dbReference type="PANTHER" id="PTHR34403:SF8">
    <property type="entry name" value="TOL-PAL SYSTEM PROTEIN TOLA"/>
    <property type="match status" value="1"/>
</dbReference>
<dbReference type="Pfam" id="PF17961">
    <property type="entry name" value="Big_8"/>
    <property type="match status" value="1"/>
</dbReference>
<dbReference type="Pfam" id="PF00746">
    <property type="entry name" value="Gram_pos_anchor"/>
    <property type="match status" value="1"/>
</dbReference>
<dbReference type="Pfam" id="PF10425">
    <property type="entry name" value="SdrG_C_C"/>
    <property type="match status" value="1"/>
</dbReference>
<dbReference type="Pfam" id="PF04650">
    <property type="entry name" value="YSIRK_signal"/>
    <property type="match status" value="1"/>
</dbReference>
<dbReference type="SUPFAM" id="SSF49401">
    <property type="entry name" value="Bacterial adhesins"/>
    <property type="match status" value="2"/>
</dbReference>
<dbReference type="PROSITE" id="PS50847">
    <property type="entry name" value="GRAM_POS_ANCHORING"/>
    <property type="match status" value="1"/>
</dbReference>
<proteinExistence type="evidence at protein level"/>
<organism>
    <name type="scientific">Staphylococcus aureus (strain NCTC 8325 / PS 47)</name>
    <dbReference type="NCBI Taxonomy" id="93061"/>
    <lineage>
        <taxon>Bacteria</taxon>
        <taxon>Bacillati</taxon>
        <taxon>Bacillota</taxon>
        <taxon>Bacilli</taxon>
        <taxon>Bacillales</taxon>
        <taxon>Staphylococcaceae</taxon>
        <taxon>Staphylococcus</taxon>
    </lineage>
</organism>
<feature type="signal peptide" evidence="1">
    <location>
        <begin position="1"/>
        <end position="39"/>
    </location>
</feature>
<feature type="chain" id="PRO_0000249324" description="Clumping factor A">
    <location>
        <begin position="40"/>
        <end position="893"/>
    </location>
</feature>
<feature type="propeptide" id="PRO_0000249325" description="Removed by sortase" evidence="2 8">
    <location>
        <begin position="894"/>
        <end position="927"/>
    </location>
</feature>
<feature type="region of interest" description="Disordered" evidence="3">
    <location>
        <begin position="34"/>
        <end position="200"/>
    </location>
</feature>
<feature type="region of interest" description="Ligand binding A region">
    <location>
        <begin position="40"/>
        <end position="542"/>
    </location>
</feature>
<feature type="region of interest" description="Disordered" evidence="3">
    <location>
        <begin position="529"/>
        <end position="898"/>
    </location>
</feature>
<feature type="short sequence motif" description="YSIRK-G/S signaling motif" evidence="9">
    <location>
        <begin position="9"/>
        <end position="20"/>
    </location>
</feature>
<feature type="short sequence motif" description="LPXTG sorting signal" evidence="2">
    <location>
        <begin position="890"/>
        <end position="894"/>
    </location>
</feature>
<feature type="compositionally biased region" description="Low complexity" evidence="3">
    <location>
        <begin position="47"/>
        <end position="65"/>
    </location>
</feature>
<feature type="compositionally biased region" description="Polar residues" evidence="3">
    <location>
        <begin position="71"/>
        <end position="105"/>
    </location>
</feature>
<feature type="compositionally biased region" description="Low complexity" evidence="3">
    <location>
        <begin position="106"/>
        <end position="132"/>
    </location>
</feature>
<feature type="compositionally biased region" description="Low complexity" evidence="3">
    <location>
        <begin position="143"/>
        <end position="162"/>
    </location>
</feature>
<feature type="compositionally biased region" description="Polar residues" evidence="3">
    <location>
        <begin position="163"/>
        <end position="200"/>
    </location>
</feature>
<feature type="compositionally biased region" description="Acidic residues" evidence="3">
    <location>
        <begin position="547"/>
        <end position="565"/>
    </location>
</feature>
<feature type="compositionally biased region" description="Low complexity" evidence="3">
    <location>
        <begin position="566"/>
        <end position="598"/>
    </location>
</feature>
<feature type="compositionally biased region" description="Acidic residues" evidence="3">
    <location>
        <begin position="599"/>
        <end position="855"/>
    </location>
</feature>
<feature type="compositionally biased region" description="Low complexity" evidence="3">
    <location>
        <begin position="856"/>
        <end position="867"/>
    </location>
</feature>
<feature type="compositionally biased region" description="Basic and acidic residues" evidence="3">
    <location>
        <begin position="881"/>
        <end position="890"/>
    </location>
</feature>
<feature type="modified residue" description="Pentaglycyl murein peptidoglycan amidated threonine" evidence="2">
    <location>
        <position position="893"/>
    </location>
</feature>
<feature type="mutagenesis site" description="2-fold reduction in clumping titer compared to wild-type." evidence="5">
    <original>N</original>
    <variation>A</variation>
    <location>
        <position position="525"/>
    </location>
</feature>
<feature type="mutagenesis site" description="More than 1000-fold reduction in clumping titer compared to wild-type. No binding to soluble Fg. Dramatic reduction of ability to adhere to immobilized Fg.">
    <original>EV</original>
    <variation>AS</variation>
    <location>
        <begin position="526"/>
        <end position="527"/>
    </location>
</feature>
<feature type="mutagenesis site" description="32-fold reduction in clumping titer compared to wild-type. Reduced ability to bind to soluble Fg and to adhere to immobilized Fg." evidence="5">
    <original>E</original>
    <variation>A</variation>
    <location>
        <position position="526"/>
    </location>
</feature>
<feature type="mutagenesis site" description="16- to 32-fold reduction in clumping titer compared to wild-type. activity. Reduced ability to bind to soluble Fg and to adhere to immobilized Fg." evidence="5">
    <original>V</original>
    <variation>S</variation>
    <location>
        <position position="527"/>
    </location>
</feature>
<feature type="mutagenesis site" description="2-fold reduction in clumping titer compared to wild-type; when associated with A-532." evidence="5">
    <original>A</original>
    <variation>V</variation>
    <location>
        <position position="528"/>
    </location>
</feature>
<feature type="mutagenesis site" description="2-fold reduction in clumping titer compared to wild-type; when associated with V-528." evidence="5">
    <original>G</original>
    <variation>A</variation>
    <location>
        <position position="532"/>
    </location>
</feature>
<feature type="mutagenesis site" description="2-fold reduction in clumping titer compared to wild-type." evidence="5">
    <original>D</original>
    <variation>A</variation>
    <location>
        <position position="537"/>
    </location>
</feature>
<feature type="mutagenesis site" description="2-fold reduction in clumping titer compared to wild-type." evidence="5">
    <original>E</original>
    <variation>A</variation>
    <location>
        <position position="546"/>
    </location>
</feature>
<feature type="mutagenesis site" description="2-fold reduction in clumping titer compared to wild-type." evidence="5">
    <original>E</original>
    <variation>A</variation>
    <location>
        <position position="559"/>
    </location>
</feature>
<feature type="helix" evidence="10">
    <location>
        <begin position="233"/>
        <end position="235"/>
    </location>
</feature>
<feature type="strand" evidence="10">
    <location>
        <begin position="237"/>
        <end position="244"/>
    </location>
</feature>
<feature type="strand" evidence="10">
    <location>
        <begin position="247"/>
        <end position="249"/>
    </location>
</feature>
<feature type="strand" evidence="10">
    <location>
        <begin position="257"/>
        <end position="265"/>
    </location>
</feature>
<feature type="strand" evidence="10">
    <location>
        <begin position="274"/>
        <end position="278"/>
    </location>
</feature>
<feature type="strand" evidence="10">
    <location>
        <begin position="283"/>
        <end position="285"/>
    </location>
</feature>
<feature type="strand" evidence="10">
    <location>
        <begin position="305"/>
        <end position="309"/>
    </location>
</feature>
<feature type="strand" evidence="10">
    <location>
        <begin position="315"/>
        <end position="319"/>
    </location>
</feature>
<feature type="helix" evidence="10">
    <location>
        <begin position="322"/>
        <end position="325"/>
    </location>
</feature>
<feature type="strand" evidence="10">
    <location>
        <begin position="326"/>
        <end position="339"/>
    </location>
</feature>
<feature type="turn" evidence="10">
    <location>
        <begin position="341"/>
        <end position="343"/>
    </location>
</feature>
<feature type="strand" evidence="10">
    <location>
        <begin position="346"/>
        <end position="356"/>
    </location>
</feature>
<feature type="strand" evidence="10">
    <location>
        <begin position="359"/>
        <end position="367"/>
    </location>
</feature>
<feature type="strand" evidence="10">
    <location>
        <begin position="373"/>
        <end position="375"/>
    </location>
</feature>
<feature type="strand" evidence="10">
    <location>
        <begin position="378"/>
        <end position="388"/>
    </location>
</feature>
<feature type="turn" evidence="10">
    <location>
        <begin position="389"/>
        <end position="392"/>
    </location>
</feature>
<feature type="strand" evidence="10">
    <location>
        <begin position="393"/>
        <end position="401"/>
    </location>
</feature>
<feature type="strand" evidence="10">
    <location>
        <begin position="407"/>
        <end position="416"/>
    </location>
</feature>
<feature type="turn" evidence="10">
    <location>
        <begin position="428"/>
        <end position="430"/>
    </location>
</feature>
<feature type="strand" evidence="10">
    <location>
        <begin position="432"/>
        <end position="437"/>
    </location>
</feature>
<feature type="helix" evidence="10">
    <location>
        <begin position="441"/>
        <end position="443"/>
    </location>
</feature>
<feature type="helix" evidence="10">
    <location>
        <begin position="459"/>
        <end position="461"/>
    </location>
</feature>
<feature type="strand" evidence="10">
    <location>
        <begin position="462"/>
        <end position="468"/>
    </location>
</feature>
<feature type="strand" evidence="10">
    <location>
        <begin position="471"/>
        <end position="475"/>
    </location>
</feature>
<feature type="strand" evidence="10">
    <location>
        <begin position="481"/>
        <end position="483"/>
    </location>
</feature>
<feature type="strand" evidence="10">
    <location>
        <begin position="487"/>
        <end position="495"/>
    </location>
</feature>
<feature type="strand" evidence="10">
    <location>
        <begin position="505"/>
        <end position="512"/>
    </location>
</feature>
<feature type="strand" evidence="10">
    <location>
        <begin position="518"/>
        <end position="530"/>
    </location>
</feature>
<feature type="strand" evidence="10">
    <location>
        <begin position="533"/>
        <end position="540"/>
    </location>
</feature>
<reference key="1">
    <citation type="book" date="2006" name="Gram positive pathogens, 2nd edition">
        <title>The Staphylococcus aureus NCTC 8325 genome.</title>
        <editorList>
            <person name="Fischetti V."/>
            <person name="Novick R."/>
            <person name="Ferretti J."/>
            <person name="Portnoy D."/>
            <person name="Rood J."/>
        </editorList>
        <authorList>
            <person name="Gillaspy A.F."/>
            <person name="Worrell V."/>
            <person name="Orvis J."/>
            <person name="Roe B.A."/>
            <person name="Dyer D.W."/>
            <person name="Iandolo J.J."/>
        </authorList>
    </citation>
    <scope>NUCLEOTIDE SEQUENCE [LARGE SCALE GENOMIC DNA]</scope>
    <source>
        <strain>NCTC 8325 / PS 47</strain>
    </source>
</reference>
<reference key="2">
    <citation type="journal article" date="1999" name="Infect. Immun.">
        <title>Antibacterial action of extracellular mammalian group IIA phospholipase A2 against grossly clumped Staphylococcus aureus.</title>
        <authorList>
            <person name="Dominiecki M.E."/>
            <person name="Weiss J."/>
        </authorList>
    </citation>
    <scope>FUNCTION</scope>
</reference>
<reference key="3">
    <citation type="journal article" date="2001" name="J. Biol. Chem.">
        <title>Identification of residues in the Staphylococcus aureus fibrinogen-binding MSCRAMM clumping factor A (ClfA) that are important for ligand binding.</title>
        <authorList>
            <person name="Hartford O.M."/>
            <person name="Wann E.R."/>
            <person name="Hoeoek M."/>
            <person name="Foster T.J."/>
        </authorList>
    </citation>
    <scope>MUTAGENESIS OF ASN-525; GLU-526; VAL-527; ALA-528; GLY-532; ASP-537; GLU-546 AND GLU-559</scope>
</reference>
<reference key="4">
    <citation type="journal article" date="2002" name="Proc. Natl. Acad. Sci. U.S.A.">
        <title>An iron-regulated sortase anchors a class of surface protein during Staphylococcus aureus pathogenesis.</title>
        <authorList>
            <person name="Mazmanian S.K."/>
            <person name="Ton-That H."/>
            <person name="Su K."/>
            <person name="Schneewind O."/>
        </authorList>
    </citation>
    <scope>SUBCELLULAR LOCATION</scope>
    <scope>PROCESSING BY SORTASE A</scope>
    <source>
        <strain>RN4220</strain>
    </source>
</reference>
<reference key="5">
    <citation type="journal article" date="2008" name="EMBO J.">
        <title>Signal peptides direct surface proteins to two distinct envelope locations of Staphylococcus aureus.</title>
        <authorList>
            <person name="DeDent A."/>
            <person name="Bae T."/>
            <person name="Missiakas D.M."/>
            <person name="Schneewind O."/>
        </authorList>
    </citation>
    <scope>SUBCELLULAR LOCATION</scope>
    <source>
        <strain>RN4220</strain>
    </source>
</reference>
<gene>
    <name type="primary">clfA</name>
    <name type="ordered locus">SAOUHSC_00812</name>
</gene>
<comment type="function">
    <text evidence="4">Cell surface-associated protein implicated in virulence. Promotes bacterial attachment exclusively to the gamma-chain of human fibrinogen. Induces formation of bacterial clumps, which diminish the ability of group IIA phospholipase A2 to cause bacterial phospholipid hydrolysis and killing. Significantly decreases macrophage phagocytosis possibly thanks to the clumps, clumped bacteria being too large to be phagocytosed. Dominant factor responsible for human platelet aggregation, which may be an important mechanism for initiating infective endocarditis. Enhances spleen cell proliferative response in vitro, contributing significantly to the immunostimulatory activity of S.aureus.</text>
</comment>
<comment type="subcellular location">
    <subcellularLocation>
        <location evidence="2 6 8">Secreted</location>
        <location evidence="2 6 8">Cell wall</location>
        <topology evidence="2 8">Peptidoglycan-anchor</topology>
    </subcellularLocation>
    <text evidence="6 8">Found in a ring-like distribution on the cell surface (PubMed:18800056). Does not localize with SasF (PubMed:18800056). Exchanging the ClfA and SasF signal peptides retargets the mature protein on the cell surface (PubMed:18800056). Anchored to the cell wall by sortase A (Probable).</text>
</comment>
<comment type="similarity">
    <text evidence="7">Belongs to the serine-aspartate repeat-containing protein (SDr) family.</text>
</comment>
<protein>
    <recommendedName>
        <fullName>Clumping factor A</fullName>
    </recommendedName>
    <alternativeName>
        <fullName>Fibrinogen receptor A</fullName>
    </alternativeName>
    <alternativeName>
        <fullName>Fibrinogen-binding protein A</fullName>
    </alternativeName>
</protein>
<sequence length="927" mass="96448">MNMKKKEKHAIRKKSIGVASVLVGTLIGFGLLSSKEADASENSVTQSDSASNESKSNDSSSVSAAPKTDDTNVSDTKTSSNTNNGETSVAQNPAQQETTQSSSTNATTEETPVTGEATTTTTNQANTPATTQSSNTNAEELVNQTSNETTSNDTNTVSSVNSPQNSTNAENVSTTQDTSTEATPSNNESAPQSTDASNKDVVNQAVNTSAPRMRAFSLAAVAADAPVAGTDITNQLTNVTVGIDSGTTVYPHQAGYVKLNYGFSVPNSAVKGDTFKITVPKELNLNGVTSTAKVPPIMAGDQVLANGVIDSDGNVIYTFTDYVNTKDDVKATLTMPAYIDPENVKKTGNVTLATGIGSTTANKTVLVDYEKYGKFYNLSIKGTIDQIDKTNNTYRQTIYVNPSGDNVIAPVLTGNLKPNTDSNALIDQQNTSIKVYKVDNAADLSESYFVNPENFEDVTNSVNITFPNPNQYKVEFNTPDDQITTPYIVVVNGHIDPNSKGDLALRSTLYGYNSNIIWRSMSWDNEVAFNNGSGSGDGIDKPVVPEQPDEPGEIEPIPEDSDSDPGSDSGSDSNSDSGSDSGSDSTSDSGSDSASDSDSASDSDSASDSDSASDSDSASDSDSDNDSDSDSDSDSDSDSDSDSDSDSDSDSDSDSDSDSDSDSDSDSDSDSDSDSDSDSDSDSDSDSDSDSDSDSDSDSDSDSDSDSDSDSDSDSDSDSDSDSDSDSDSDSDSDSDSDSDSDSDSDSDSDSDSDSDSDSDSDSDSDSASDSDSDSDSDSDSDSDSDSDSDSDSDSDSDSDSDSDSDSESDSDSDSDSDSDSDSDSDSDSDSASDSDSGSDSDSSSDSDSESDSNSDSESVSNNNVVPPNSPKNGTNASNKNEAKDSKEPLPDTGSEDEANTSLIWGLLASIGSLLLFRRKKENKDKK</sequence>
<evidence type="ECO:0000255" key="1"/>
<evidence type="ECO:0000255" key="2">
    <source>
        <dbReference type="PROSITE-ProRule" id="PRU00477"/>
    </source>
</evidence>
<evidence type="ECO:0000256" key="3">
    <source>
        <dbReference type="SAM" id="MobiDB-lite"/>
    </source>
</evidence>
<evidence type="ECO:0000269" key="4">
    <source>
    </source>
</evidence>
<evidence type="ECO:0000269" key="5">
    <source>
    </source>
</evidence>
<evidence type="ECO:0000269" key="6">
    <source>
    </source>
</evidence>
<evidence type="ECO:0000305" key="7"/>
<evidence type="ECO:0000305" key="8">
    <source>
    </source>
</evidence>
<evidence type="ECO:0000305" key="9">
    <source>
    </source>
</evidence>
<evidence type="ECO:0007829" key="10">
    <source>
        <dbReference type="PDB" id="2VR3"/>
    </source>
</evidence>
<name>CLFA_STAA8</name>
<keyword id="KW-0002">3D-structure</keyword>
<keyword id="KW-0134">Cell wall</keyword>
<keyword id="KW-0572">Peptidoglycan-anchor</keyword>
<keyword id="KW-1185">Reference proteome</keyword>
<keyword id="KW-0964">Secreted</keyword>
<keyword id="KW-0732">Signal</keyword>
<keyword id="KW-0843">Virulence</keyword>
<accession>Q2G015</accession>